<protein>
    <recommendedName>
        <fullName>Neuropilin-1a</fullName>
        <shortName>znrp1</shortName>
    </recommendedName>
</protein>
<organism evidence="10">
    <name type="scientific">Danio rerio</name>
    <name type="common">Zebrafish</name>
    <name type="synonym">Brachydanio rerio</name>
    <dbReference type="NCBI Taxonomy" id="7955"/>
    <lineage>
        <taxon>Eukaryota</taxon>
        <taxon>Metazoa</taxon>
        <taxon>Chordata</taxon>
        <taxon>Craniata</taxon>
        <taxon>Vertebrata</taxon>
        <taxon>Euteleostomi</taxon>
        <taxon>Actinopterygii</taxon>
        <taxon>Neopterygii</taxon>
        <taxon>Teleostei</taxon>
        <taxon>Ostariophysi</taxon>
        <taxon>Cypriniformes</taxon>
        <taxon>Danionidae</taxon>
        <taxon>Danioninae</taxon>
        <taxon>Danio</taxon>
    </lineage>
</organism>
<dbReference type="EMBL" id="AY064213">
    <property type="protein sequence ID" value="AAL40862.1"/>
    <property type="molecule type" value="mRNA"/>
</dbReference>
<dbReference type="EMBL" id="AB088776">
    <property type="protein sequence ID" value="BAC53657.1"/>
    <property type="molecule type" value="mRNA"/>
</dbReference>
<dbReference type="SMR" id="Q8QFX6"/>
<dbReference type="FunCoup" id="Q8QFX6">
    <property type="interactions" value="852"/>
</dbReference>
<dbReference type="STRING" id="7955.ENSDARP00000140900"/>
<dbReference type="GlyCosmos" id="Q8QFX6">
    <property type="glycosylation" value="4 sites, No reported glycans"/>
</dbReference>
<dbReference type="PaxDb" id="7955-ENSDARP00000105696"/>
<dbReference type="AGR" id="ZFIN:ZDB-GENE-030519-2"/>
<dbReference type="ZFIN" id="ZDB-GENE-030519-2">
    <property type="gene designation" value="nrp1a"/>
</dbReference>
<dbReference type="eggNOG" id="ENOG502QUEH">
    <property type="taxonomic scope" value="Eukaryota"/>
</dbReference>
<dbReference type="InParanoid" id="Q8QFX6"/>
<dbReference type="PhylomeDB" id="Q8QFX6"/>
<dbReference type="Reactome" id="R-DRE-194306">
    <property type="pathway name" value="Neurophilin interactions with VEGF and VEGFR"/>
</dbReference>
<dbReference type="Reactome" id="R-DRE-399954">
    <property type="pathway name" value="Sema3A PAK dependent Axon repulsion"/>
</dbReference>
<dbReference type="Reactome" id="R-DRE-399956">
    <property type="pathway name" value="CRMPs in Sema3A signaling"/>
</dbReference>
<dbReference type="PRO" id="PR:Q8QFX6"/>
<dbReference type="Proteomes" id="UP000000437">
    <property type="component" value="Unplaced"/>
</dbReference>
<dbReference type="GO" id="GO:0030424">
    <property type="term" value="C:axon"/>
    <property type="evidence" value="ECO:0000318"/>
    <property type="project" value="GO_Central"/>
</dbReference>
<dbReference type="GO" id="GO:0005925">
    <property type="term" value="C:focal adhesion"/>
    <property type="evidence" value="ECO:0000318"/>
    <property type="project" value="GO_Central"/>
</dbReference>
<dbReference type="GO" id="GO:0005886">
    <property type="term" value="C:plasma membrane"/>
    <property type="evidence" value="ECO:0000318"/>
    <property type="project" value="GO_Central"/>
</dbReference>
<dbReference type="GO" id="GO:0008201">
    <property type="term" value="F:heparin binding"/>
    <property type="evidence" value="ECO:0007669"/>
    <property type="project" value="UniProtKB-KW"/>
</dbReference>
<dbReference type="GO" id="GO:0046872">
    <property type="term" value="F:metal ion binding"/>
    <property type="evidence" value="ECO:0007669"/>
    <property type="project" value="UniProtKB-KW"/>
</dbReference>
<dbReference type="GO" id="GO:0017154">
    <property type="term" value="F:semaphorin receptor activity"/>
    <property type="evidence" value="ECO:0000318"/>
    <property type="project" value="GO_Central"/>
</dbReference>
<dbReference type="GO" id="GO:0038085">
    <property type="term" value="F:vascular endothelial growth factor binding"/>
    <property type="evidence" value="ECO:0000318"/>
    <property type="project" value="GO_Central"/>
</dbReference>
<dbReference type="GO" id="GO:0005021">
    <property type="term" value="F:vascular endothelial growth factor receptor activity"/>
    <property type="evidence" value="ECO:0000314"/>
    <property type="project" value="UniProtKB"/>
</dbReference>
<dbReference type="GO" id="GO:0001525">
    <property type="term" value="P:angiogenesis"/>
    <property type="evidence" value="ECO:0000315"/>
    <property type="project" value="ZFIN"/>
</dbReference>
<dbReference type="GO" id="GO:0060055">
    <property type="term" value="P:angiogenesis involved in wound healing"/>
    <property type="evidence" value="ECO:0000315"/>
    <property type="project" value="ZFIN"/>
</dbReference>
<dbReference type="GO" id="GO:0048675">
    <property type="term" value="P:axon extension"/>
    <property type="evidence" value="ECO:0000315"/>
    <property type="project" value="ZFIN"/>
</dbReference>
<dbReference type="GO" id="GO:0007411">
    <property type="term" value="P:axon guidance"/>
    <property type="evidence" value="ECO:0000315"/>
    <property type="project" value="ZFIN"/>
</dbReference>
<dbReference type="GO" id="GO:0007413">
    <property type="term" value="P:axonal fasciculation"/>
    <property type="evidence" value="ECO:0000315"/>
    <property type="project" value="ZFIN"/>
</dbReference>
<dbReference type="GO" id="GO:0051216">
    <property type="term" value="P:cartilage development"/>
    <property type="evidence" value="ECO:0000315"/>
    <property type="project" value="ZFIN"/>
</dbReference>
<dbReference type="GO" id="GO:0001775">
    <property type="term" value="P:cell activation"/>
    <property type="evidence" value="ECO:0000315"/>
    <property type="project" value="ZFIN"/>
</dbReference>
<dbReference type="GO" id="GO:0030900">
    <property type="term" value="P:forebrain development"/>
    <property type="evidence" value="ECO:0000315"/>
    <property type="project" value="ZFIN"/>
</dbReference>
<dbReference type="GO" id="GO:0007508">
    <property type="term" value="P:larval heart development"/>
    <property type="evidence" value="ECO:0000315"/>
    <property type="project" value="ZFIN"/>
</dbReference>
<dbReference type="GO" id="GO:0008045">
    <property type="term" value="P:motor neuron axon guidance"/>
    <property type="evidence" value="ECO:0000315"/>
    <property type="project" value="ZFIN"/>
</dbReference>
<dbReference type="GO" id="GO:0001755">
    <property type="term" value="P:neural crest cell migration"/>
    <property type="evidence" value="ECO:0000315"/>
    <property type="project" value="ZFIN"/>
</dbReference>
<dbReference type="GO" id="GO:0071678">
    <property type="term" value="P:olfactory bulb axon guidance"/>
    <property type="evidence" value="ECO:0000315"/>
    <property type="project" value="ZFIN"/>
</dbReference>
<dbReference type="GO" id="GO:0090050">
    <property type="term" value="P:positive regulation of cell migration involved in sprouting angiogenesis"/>
    <property type="evidence" value="ECO:0000316"/>
    <property type="project" value="BHF-UCL"/>
</dbReference>
<dbReference type="GO" id="GO:0010595">
    <property type="term" value="P:positive regulation of endothelial cell migration"/>
    <property type="evidence" value="ECO:0000318"/>
    <property type="project" value="GO_Central"/>
</dbReference>
<dbReference type="GO" id="GO:0051491">
    <property type="term" value="P:positive regulation of filopodium assembly"/>
    <property type="evidence" value="ECO:0000316"/>
    <property type="project" value="BHF-UCL"/>
</dbReference>
<dbReference type="GO" id="GO:0045765">
    <property type="term" value="P:regulation of angiogenesis"/>
    <property type="evidence" value="ECO:0000315"/>
    <property type="project" value="UniProtKB"/>
</dbReference>
<dbReference type="GO" id="GO:0050770">
    <property type="term" value="P:regulation of axonogenesis"/>
    <property type="evidence" value="ECO:0000315"/>
    <property type="project" value="ZFIN"/>
</dbReference>
<dbReference type="GO" id="GO:2000289">
    <property type="term" value="P:regulation of photoreceptor cell axon guidance"/>
    <property type="evidence" value="ECO:0000316"/>
    <property type="project" value="ZFIN"/>
</dbReference>
<dbReference type="GO" id="GO:0090259">
    <property type="term" value="P:regulation of retinal ganglion cell axon guidance"/>
    <property type="evidence" value="ECO:0000316"/>
    <property type="project" value="ZFIN"/>
</dbReference>
<dbReference type="GO" id="GO:0030947">
    <property type="term" value="P:regulation of vascular endothelial growth factor receptor signaling pathway"/>
    <property type="evidence" value="ECO:0000315"/>
    <property type="project" value="ZFIN"/>
</dbReference>
<dbReference type="GO" id="GO:0001666">
    <property type="term" value="P:response to hypoxia"/>
    <property type="evidence" value="ECO:0000314"/>
    <property type="project" value="ZFIN"/>
</dbReference>
<dbReference type="GO" id="GO:0009611">
    <property type="term" value="P:response to wounding"/>
    <property type="evidence" value="ECO:0000318"/>
    <property type="project" value="GO_Central"/>
</dbReference>
<dbReference type="GO" id="GO:0002040">
    <property type="term" value="P:sprouting angiogenesis"/>
    <property type="evidence" value="ECO:0000316"/>
    <property type="project" value="ZFIN"/>
</dbReference>
<dbReference type="GO" id="GO:0048538">
    <property type="term" value="P:thymus development"/>
    <property type="evidence" value="ECO:0000315"/>
    <property type="project" value="ZFIN"/>
</dbReference>
<dbReference type="GO" id="GO:0048010">
    <property type="term" value="P:vascular endothelial growth factor receptor signaling pathway"/>
    <property type="evidence" value="ECO:0000314"/>
    <property type="project" value="UniProtKB"/>
</dbReference>
<dbReference type="GO" id="GO:0001944">
    <property type="term" value="P:vasculature development"/>
    <property type="evidence" value="ECO:0000315"/>
    <property type="project" value="ZFIN"/>
</dbReference>
<dbReference type="GO" id="GO:0001570">
    <property type="term" value="P:vasculogenesis"/>
    <property type="evidence" value="ECO:0000315"/>
    <property type="project" value="ZFIN"/>
</dbReference>
<dbReference type="CDD" id="cd00041">
    <property type="entry name" value="CUB"/>
    <property type="match status" value="2"/>
</dbReference>
<dbReference type="CDD" id="cd00057">
    <property type="entry name" value="FA58C"/>
    <property type="match status" value="2"/>
</dbReference>
<dbReference type="CDD" id="cd06263">
    <property type="entry name" value="MAM"/>
    <property type="match status" value="1"/>
</dbReference>
<dbReference type="FunFam" id="2.60.120.260:FF:000002">
    <property type="entry name" value="Coagulation factor VIII"/>
    <property type="match status" value="1"/>
</dbReference>
<dbReference type="FunFam" id="2.60.120.200:FF:000043">
    <property type="entry name" value="Neuropilin"/>
    <property type="match status" value="1"/>
</dbReference>
<dbReference type="FunFam" id="2.60.120.260:FF:000013">
    <property type="entry name" value="Neuropilin"/>
    <property type="match status" value="1"/>
</dbReference>
<dbReference type="FunFam" id="2.60.120.290:FF:000003">
    <property type="entry name" value="Neuropilin"/>
    <property type="match status" value="1"/>
</dbReference>
<dbReference type="FunFam" id="2.60.120.290:FF:000010">
    <property type="entry name" value="Neuropilin"/>
    <property type="match status" value="1"/>
</dbReference>
<dbReference type="Gene3D" id="2.60.120.200">
    <property type="match status" value="1"/>
</dbReference>
<dbReference type="Gene3D" id="2.60.120.260">
    <property type="entry name" value="Galactose-binding domain-like"/>
    <property type="match status" value="2"/>
</dbReference>
<dbReference type="Gene3D" id="2.60.120.290">
    <property type="entry name" value="Spermadhesin, CUB domain"/>
    <property type="match status" value="2"/>
</dbReference>
<dbReference type="InterPro" id="IPR013320">
    <property type="entry name" value="ConA-like_dom_sf"/>
</dbReference>
<dbReference type="InterPro" id="IPR000859">
    <property type="entry name" value="CUB_dom"/>
</dbReference>
<dbReference type="InterPro" id="IPR000421">
    <property type="entry name" value="FA58C"/>
</dbReference>
<dbReference type="InterPro" id="IPR008979">
    <property type="entry name" value="Galactose-bd-like_sf"/>
</dbReference>
<dbReference type="InterPro" id="IPR000998">
    <property type="entry name" value="MAM_dom"/>
</dbReference>
<dbReference type="InterPro" id="IPR014648">
    <property type="entry name" value="Neuropilin"/>
</dbReference>
<dbReference type="InterPro" id="IPR022579">
    <property type="entry name" value="Neuropilin_C"/>
</dbReference>
<dbReference type="InterPro" id="IPR050633">
    <property type="entry name" value="Neuropilin_MCO_CoagFactor"/>
</dbReference>
<dbReference type="InterPro" id="IPR035914">
    <property type="entry name" value="Sperma_CUB_dom_sf"/>
</dbReference>
<dbReference type="PANTHER" id="PTHR46806">
    <property type="entry name" value="F5/8 TYPE C DOMAIN-CONTAINING PROTEIN"/>
    <property type="match status" value="1"/>
</dbReference>
<dbReference type="PANTHER" id="PTHR46806:SF4">
    <property type="entry name" value="NEUROPILIN-1"/>
    <property type="match status" value="1"/>
</dbReference>
<dbReference type="Pfam" id="PF00431">
    <property type="entry name" value="CUB"/>
    <property type="match status" value="2"/>
</dbReference>
<dbReference type="Pfam" id="PF11980">
    <property type="entry name" value="DUF3481"/>
    <property type="match status" value="1"/>
</dbReference>
<dbReference type="Pfam" id="PF00754">
    <property type="entry name" value="F5_F8_type_C"/>
    <property type="match status" value="2"/>
</dbReference>
<dbReference type="Pfam" id="PF00629">
    <property type="entry name" value="MAM"/>
    <property type="match status" value="1"/>
</dbReference>
<dbReference type="PIRSF" id="PIRSF036960">
    <property type="entry name" value="Neuropilin"/>
    <property type="match status" value="1"/>
</dbReference>
<dbReference type="SMART" id="SM00042">
    <property type="entry name" value="CUB"/>
    <property type="match status" value="2"/>
</dbReference>
<dbReference type="SMART" id="SM00231">
    <property type="entry name" value="FA58C"/>
    <property type="match status" value="2"/>
</dbReference>
<dbReference type="SMART" id="SM00137">
    <property type="entry name" value="MAM"/>
    <property type="match status" value="1"/>
</dbReference>
<dbReference type="SUPFAM" id="SSF49899">
    <property type="entry name" value="Concanavalin A-like lectins/glucanases"/>
    <property type="match status" value="1"/>
</dbReference>
<dbReference type="SUPFAM" id="SSF49785">
    <property type="entry name" value="Galactose-binding domain-like"/>
    <property type="match status" value="2"/>
</dbReference>
<dbReference type="SUPFAM" id="SSF49854">
    <property type="entry name" value="Spermadhesin, CUB domain"/>
    <property type="match status" value="2"/>
</dbReference>
<dbReference type="PROSITE" id="PS01180">
    <property type="entry name" value="CUB"/>
    <property type="match status" value="2"/>
</dbReference>
<dbReference type="PROSITE" id="PS01285">
    <property type="entry name" value="FA58C_1"/>
    <property type="match status" value="1"/>
</dbReference>
<dbReference type="PROSITE" id="PS01286">
    <property type="entry name" value="FA58C_2"/>
    <property type="match status" value="2"/>
</dbReference>
<dbReference type="PROSITE" id="PS50022">
    <property type="entry name" value="FA58C_3"/>
    <property type="match status" value="2"/>
</dbReference>
<dbReference type="PROSITE" id="PS00740">
    <property type="entry name" value="MAM_1"/>
    <property type="match status" value="1"/>
</dbReference>
<dbReference type="PROSITE" id="PS50060">
    <property type="entry name" value="MAM_2"/>
    <property type="match status" value="1"/>
</dbReference>
<reference evidence="9" key="1">
    <citation type="journal article" date="2002" name="Proc. Natl. Acad. Sci. U.S.A.">
        <title>Neuropilin-1 is required for vascular development and is a mediator of VEGF-dependent angiogenesis in zebrafish.</title>
        <authorList>
            <person name="Lee P."/>
            <person name="Goishi K."/>
            <person name="Davidson A.J."/>
            <person name="Mannix R."/>
            <person name="Zon L."/>
            <person name="Klagsbrun M."/>
        </authorList>
    </citation>
    <scope>NUCLEOTIDE SEQUENCE [MRNA]</scope>
    <scope>FUNCTION</scope>
    <scope>DEVELOPMENTAL STAGE</scope>
    <source>
        <strain evidence="8">AB</strain>
        <tissue evidence="8">Embryo</tissue>
    </source>
</reference>
<reference evidence="11" key="2">
    <citation type="submission" date="2002-07" db="EMBL/GenBank/DDBJ databases">
        <title>The cloning and expression of neuropilin-1.</title>
        <authorList>
            <person name="Shoji W."/>
            <person name="Tawarayama H."/>
        </authorList>
    </citation>
    <scope>NUCLEOTIDE SEQUENCE [MRNA]</scope>
</reference>
<sequence length="923" mass="102493">MHCGLVLILFTGIFLIVSALKNDKCGDNIRITSANYLTSPGYPVSYYPSQKCIWVITAPGPNQRILINFNPHFDLEDRECKYDYVEVRDGVDENGQLVGKYCGKIAPSPVVSSGNQLFIKFVSDYETHGAGFSIRYEIFKTGPECSRNFTSSSGVIKSPGFPEKYPNNLDCTFMIFAPKMSEIVLEFESFELEPDTQPPAGVFCRYDRLEIWDGFPGVGPYIGRYCGQNTPGRIISYTGTLAMTINTDSAIAKEGFSANFTVLERTVPDDFDCTEPLGMETGEIHSDQIMASSQYSNSWSAERSRLNNPENGWTPLKDTNKEWIQVDLGFLRFVSAIGTQGAISQETKKKYYVKEYKVDVSSNGEDWITIKDGPKQKLFQGNTNPTDVVKAKFPKPTLTRYLRIRPINWETGIALRFEVYGCKISEYPCSGMLGMVSGLITDSQITVSSHIERTWVSENARLLTSRSGWMLLPQSQPYADEWLQIDLAEEKLVKGLIIQGGKHRDNKVFMKKFRLGYSNNGSDWKLVMDATGNKPKIFEGNLNYDTPALRTMEPVLTRFVRIYPDRGTPAGMGLRLELLGCEMEVPTVPPTTPAASTTPSDECDDDQANCHSGTGDGYDQTGGTTATETIREMSTIPAFLWFACDFGWANDPSFCGWISEDSGFRWQIQSSGTPTLNTGPNMDHTGGSGNFIYTLATGAQETEVARLVSPSVSGQDSDLCLSFWYHMFGSHIGTLHIKQRRETSQGSADVLLWTVSGHQGNRWREGRVLIPHSNKPYQVIIESVVERKSWGDIAVDDIKILDNVNMADCKDPDVPAEPIQPEDNFNEIMVDITDFPDIVENPDIGGAGNMLKTLDPILITIIAMSALGVFLGAICGVVLYCACSHSGMSDRNLSALENYNFELVDGVKLKKDKLNSQNSYSEA</sequence>
<accession>Q8QFX6</accession>
<accession>Q8AXP1</accession>
<proteinExistence type="evidence at transcript level"/>
<gene>
    <name type="primary">nrp1a</name>
    <name type="synonym">np-1</name>
    <name type="synonym">nrp1</name>
</gene>
<feature type="signal peptide" evidence="2">
    <location>
        <begin position="1"/>
        <end position="19"/>
    </location>
</feature>
<feature type="chain" id="PRO_0000021857" description="Neuropilin-1a">
    <location>
        <begin position="20"/>
        <end position="923"/>
    </location>
</feature>
<feature type="topological domain" description="Extracellular" evidence="2">
    <location>
        <begin position="20"/>
        <end position="856"/>
    </location>
</feature>
<feature type="transmembrane region" description="Helical" evidence="2">
    <location>
        <begin position="857"/>
        <end position="877"/>
    </location>
</feature>
<feature type="topological domain" description="Cytoplasmic" evidence="2">
    <location>
        <begin position="878"/>
        <end position="923"/>
    </location>
</feature>
<feature type="domain" description="CUB 1" evidence="3 9">
    <location>
        <begin position="25"/>
        <end position="139"/>
    </location>
</feature>
<feature type="domain" description="CUB 2" evidence="3 9">
    <location>
        <begin position="145"/>
        <end position="263"/>
    </location>
</feature>
<feature type="domain" description="F5/8 type C 1" evidence="4 9">
    <location>
        <begin position="273"/>
        <end position="422"/>
    </location>
</feature>
<feature type="domain" description="F5/8 type C 2" evidence="4 9">
    <location>
        <begin position="429"/>
        <end position="581"/>
    </location>
</feature>
<feature type="domain" description="MAM" evidence="5 9">
    <location>
        <begin position="642"/>
        <end position="811"/>
    </location>
</feature>
<feature type="region of interest" description="Disordered" evidence="7">
    <location>
        <begin position="587"/>
        <end position="624"/>
    </location>
</feature>
<feature type="binding site" evidence="1">
    <location>
        <position position="193"/>
    </location>
    <ligand>
        <name>Ca(2+)</name>
        <dbReference type="ChEBI" id="CHEBI:29108"/>
    </ligand>
</feature>
<feature type="binding site" evidence="1">
    <location>
        <position position="207"/>
    </location>
    <ligand>
        <name>Ca(2+)</name>
        <dbReference type="ChEBI" id="CHEBI:29108"/>
    </ligand>
</feature>
<feature type="binding site" evidence="1">
    <location>
        <position position="248"/>
    </location>
    <ligand>
        <name>Ca(2+)</name>
        <dbReference type="ChEBI" id="CHEBI:29108"/>
    </ligand>
</feature>
<feature type="glycosylation site" description="N-linked (GlcNAc...) asparagine" evidence="9">
    <location>
        <position position="148"/>
    </location>
</feature>
<feature type="glycosylation site" description="N-linked (GlcNAc...) asparagine" evidence="9">
    <location>
        <position position="259"/>
    </location>
</feature>
<feature type="glycosylation site" description="N-linked (GlcNAc...) asparagine" evidence="9">
    <location>
        <position position="520"/>
    </location>
</feature>
<feature type="glycosylation site" description="O-linked (Xyl...) (chondroitin sulfate) serine; alternate" evidence="1">
    <location>
        <position position="612"/>
    </location>
</feature>
<feature type="glycosylation site" description="O-linked (Xyl...) (heparan sulfate) serine; alternate" evidence="1">
    <location>
        <position position="612"/>
    </location>
</feature>
<feature type="disulfide bond" evidence="1">
    <location>
        <begin position="25"/>
        <end position="52"/>
    </location>
</feature>
<feature type="disulfide bond" evidence="1">
    <location>
        <begin position="80"/>
        <end position="102"/>
    </location>
</feature>
<feature type="disulfide bond" evidence="1">
    <location>
        <begin position="145"/>
        <end position="171"/>
    </location>
</feature>
<feature type="disulfide bond" evidence="1">
    <location>
        <begin position="204"/>
        <end position="226"/>
    </location>
</feature>
<feature type="disulfide bond" evidence="1">
    <location>
        <begin position="273"/>
        <end position="422"/>
    </location>
</feature>
<feature type="disulfide bond" evidence="1">
    <location>
        <begin position="429"/>
        <end position="581"/>
    </location>
</feature>
<feature type="sequence conflict" description="In Ref. 2; BAC53657." evidence="9" ref="2">
    <original>T</original>
    <variation>S</variation>
    <location>
        <position position="230"/>
    </location>
</feature>
<feature type="sequence conflict" description="In Ref. 2; BAC53657." evidence="9" ref="2">
    <original>K</original>
    <variation>E</variation>
    <location>
        <position position="317"/>
    </location>
</feature>
<feature type="sequence conflict" description="In Ref. 2; BAC53657." evidence="9" ref="2">
    <original>T</original>
    <variation>S</variation>
    <location>
        <position position="454"/>
    </location>
</feature>
<feature type="sequence conflict" description="In Ref. 2; BAC53657." evidence="9" ref="2">
    <original>L</original>
    <variation>M</variation>
    <location>
        <position position="463"/>
    </location>
</feature>
<feature type="sequence conflict" description="In Ref. 2; BAC53657." evidence="9" ref="2">
    <original>G</original>
    <variation>D</variation>
    <location>
        <position position="617"/>
    </location>
</feature>
<name>NRP1A_DANRE</name>
<evidence type="ECO:0000250" key="1">
    <source>
        <dbReference type="UniProtKB" id="O14786"/>
    </source>
</evidence>
<evidence type="ECO:0000255" key="2"/>
<evidence type="ECO:0000255" key="3">
    <source>
        <dbReference type="PROSITE-ProRule" id="PRU00059"/>
    </source>
</evidence>
<evidence type="ECO:0000255" key="4">
    <source>
        <dbReference type="PROSITE-ProRule" id="PRU00081"/>
    </source>
</evidence>
<evidence type="ECO:0000255" key="5">
    <source>
        <dbReference type="PROSITE-ProRule" id="PRU00128"/>
    </source>
</evidence>
<evidence type="ECO:0000255" key="6">
    <source>
        <dbReference type="RuleBase" id="RU003307"/>
    </source>
</evidence>
<evidence type="ECO:0000256" key="7">
    <source>
        <dbReference type="SAM" id="MobiDB-lite"/>
    </source>
</evidence>
<evidence type="ECO:0000269" key="8">
    <source>
    </source>
</evidence>
<evidence type="ECO:0000305" key="9"/>
<evidence type="ECO:0000312" key="10">
    <source>
        <dbReference type="EMBL" id="AAL40862.1"/>
    </source>
</evidence>
<evidence type="ECO:0000312" key="11">
    <source>
        <dbReference type="EMBL" id="BAC53657.1"/>
    </source>
</evidence>
<comment type="function">
    <text evidence="1 8">Receptor involved in the development of the cardiovascular system, in angiogenesis, in the formation of certain neuronal circuits and in organogenesis outside the nervous system. It mediates the chemorepulsant activity of semaphorins. Regulates angiogenesis through a VEGF-dependent pathway.</text>
</comment>
<comment type="subcellular location">
    <subcellularLocation>
        <location>Membrane</location>
        <topology>Single-pass type I membrane protein</topology>
    </subcellularLocation>
</comment>
<comment type="developmental stage">
    <text evidence="8">Expressed both maternally and zygotically. Maternal transcripts are widely expressed until the early gastrula stage, then become localized to the yolk syncytial layer. During somatogenesis and later stages of development, expression occurs mainly in neuronal and vascular tissues.</text>
</comment>
<comment type="similarity">
    <text evidence="6 9">Belongs to the neuropilin family.</text>
</comment>
<keyword id="KW-0037">Angiogenesis</keyword>
<keyword id="KW-0106">Calcium</keyword>
<keyword id="KW-0217">Developmental protein</keyword>
<keyword id="KW-0221">Differentiation</keyword>
<keyword id="KW-1015">Disulfide bond</keyword>
<keyword id="KW-0325">Glycoprotein</keyword>
<keyword id="KW-0357">Heparan sulfate</keyword>
<keyword id="KW-0358">Heparin-binding</keyword>
<keyword id="KW-0472">Membrane</keyword>
<keyword id="KW-0479">Metal-binding</keyword>
<keyword id="KW-0524">Neurogenesis</keyword>
<keyword id="KW-0654">Proteoglycan</keyword>
<keyword id="KW-0675">Receptor</keyword>
<keyword id="KW-1185">Reference proteome</keyword>
<keyword id="KW-0677">Repeat</keyword>
<keyword id="KW-0732">Signal</keyword>
<keyword id="KW-0812">Transmembrane</keyword>
<keyword id="KW-1133">Transmembrane helix</keyword>